<evidence type="ECO:0000255" key="1">
    <source>
        <dbReference type="HAMAP-Rule" id="MF_00154"/>
    </source>
</evidence>
<evidence type="ECO:0000305" key="2"/>
<organism>
    <name type="scientific">Flavobacterium johnsoniae (strain ATCC 17061 / DSM 2064 / JCM 8514 / BCRC 14874 / CCUG 350202 / NBRC 14942 / NCIMB 11054 / UW101)</name>
    <name type="common">Cytophaga johnsonae</name>
    <dbReference type="NCBI Taxonomy" id="376686"/>
    <lineage>
        <taxon>Bacteria</taxon>
        <taxon>Pseudomonadati</taxon>
        <taxon>Bacteroidota</taxon>
        <taxon>Flavobacteriia</taxon>
        <taxon>Flavobacteriales</taxon>
        <taxon>Flavobacteriaceae</taxon>
        <taxon>Flavobacterium</taxon>
    </lineage>
</organism>
<name>COXX_FLAJ1</name>
<reference key="1">
    <citation type="journal article" date="2009" name="Appl. Environ. Microbiol.">
        <title>Novel features of the polysaccharide-digesting gliding bacterium Flavobacterium johnsoniae as revealed by genome sequence analysis.</title>
        <authorList>
            <person name="McBride M.J."/>
            <person name="Xie G."/>
            <person name="Martens E.C."/>
            <person name="Lapidus A."/>
            <person name="Henrissat B."/>
            <person name="Rhodes R.G."/>
            <person name="Goltsman E."/>
            <person name="Wang W."/>
            <person name="Xu J."/>
            <person name="Hunnicutt D.W."/>
            <person name="Staroscik A.M."/>
            <person name="Hoover T.R."/>
            <person name="Cheng Y.Q."/>
            <person name="Stein J.L."/>
        </authorList>
    </citation>
    <scope>NUCLEOTIDE SEQUENCE [LARGE SCALE GENOMIC DNA]</scope>
    <source>
        <strain>ATCC 17061 / DSM 2064 / JCM 8514 / BCRC 14874 / CCUG 350202 / NBRC 14942 / NCIMB 11054 / UW101</strain>
    </source>
</reference>
<sequence length="300" mass="33225">MNAAKNTLSIKSIFLDFKEITKAGLAISVLFSSIAGYLLGVNDEHPFKWSVLIVLAIGGYCMVGASNAYNQVIEKDIDSLMDRTKNRPVASGRMSKVTALIVASLLTIIGIVLLYTINAKSAMFAAISIFLYTSIYTPLKTVTSLSVFVGAFPGAIPFMLGWVAATGEFGIEAGTLFLIQFFWQFPHFWSIGWFLYDDYAKAGIFMLPTGNKDRKTALQVILYTIWLIIASLLPVLGYTGQLFISPVAAVLVFLLGLWMLFYAVRLYQLRTPKAARTLMLVSVSYISLLQIVFIVDKFLR</sequence>
<dbReference type="EC" id="2.5.1.141" evidence="1"/>
<dbReference type="EMBL" id="CP000685">
    <property type="protein sequence ID" value="ABQ04690.1"/>
    <property type="status" value="ALT_INIT"/>
    <property type="molecule type" value="Genomic_DNA"/>
</dbReference>
<dbReference type="SMR" id="A5FJD0"/>
<dbReference type="STRING" id="376686.Fjoh_1658"/>
<dbReference type="KEGG" id="fjo:Fjoh_1658"/>
<dbReference type="eggNOG" id="COG0109">
    <property type="taxonomic scope" value="Bacteria"/>
</dbReference>
<dbReference type="HOGENOM" id="CLU_029631_3_2_10"/>
<dbReference type="OrthoDB" id="9814417at2"/>
<dbReference type="UniPathway" id="UPA00834">
    <property type="reaction ID" value="UER00712"/>
</dbReference>
<dbReference type="Proteomes" id="UP000006694">
    <property type="component" value="Chromosome"/>
</dbReference>
<dbReference type="GO" id="GO:0005886">
    <property type="term" value="C:plasma membrane"/>
    <property type="evidence" value="ECO:0007669"/>
    <property type="project" value="UniProtKB-SubCell"/>
</dbReference>
<dbReference type="GO" id="GO:0008495">
    <property type="term" value="F:protoheme IX farnesyltransferase activity"/>
    <property type="evidence" value="ECO:0007669"/>
    <property type="project" value="UniProtKB-UniRule"/>
</dbReference>
<dbReference type="GO" id="GO:0006784">
    <property type="term" value="P:heme A biosynthetic process"/>
    <property type="evidence" value="ECO:0007669"/>
    <property type="project" value="TreeGrafter"/>
</dbReference>
<dbReference type="GO" id="GO:0048034">
    <property type="term" value="P:heme O biosynthetic process"/>
    <property type="evidence" value="ECO:0007669"/>
    <property type="project" value="UniProtKB-UniRule"/>
</dbReference>
<dbReference type="CDD" id="cd13957">
    <property type="entry name" value="PT_UbiA_Cox10"/>
    <property type="match status" value="1"/>
</dbReference>
<dbReference type="Gene3D" id="1.10.357.140">
    <property type="entry name" value="UbiA prenyltransferase"/>
    <property type="match status" value="1"/>
</dbReference>
<dbReference type="HAMAP" id="MF_00154">
    <property type="entry name" value="CyoE_CtaB"/>
    <property type="match status" value="1"/>
</dbReference>
<dbReference type="InterPro" id="IPR006369">
    <property type="entry name" value="Protohaem_IX_farnesylTrfase"/>
</dbReference>
<dbReference type="InterPro" id="IPR000537">
    <property type="entry name" value="UbiA_prenyltransferase"/>
</dbReference>
<dbReference type="InterPro" id="IPR030470">
    <property type="entry name" value="UbiA_prenylTrfase_CS"/>
</dbReference>
<dbReference type="InterPro" id="IPR044878">
    <property type="entry name" value="UbiA_sf"/>
</dbReference>
<dbReference type="NCBIfam" id="TIGR01473">
    <property type="entry name" value="cyoE_ctaB"/>
    <property type="match status" value="1"/>
</dbReference>
<dbReference type="PANTHER" id="PTHR43448">
    <property type="entry name" value="PROTOHEME IX FARNESYLTRANSFERASE, MITOCHONDRIAL"/>
    <property type="match status" value="1"/>
</dbReference>
<dbReference type="PANTHER" id="PTHR43448:SF2">
    <property type="entry name" value="PROTOHEME IX FARNESYLTRANSFERASE, MITOCHONDRIAL"/>
    <property type="match status" value="1"/>
</dbReference>
<dbReference type="Pfam" id="PF01040">
    <property type="entry name" value="UbiA"/>
    <property type="match status" value="1"/>
</dbReference>
<dbReference type="PROSITE" id="PS00943">
    <property type="entry name" value="UBIA"/>
    <property type="match status" value="1"/>
</dbReference>
<gene>
    <name evidence="1" type="primary">ctaB</name>
    <name type="ordered locus">Fjoh_1658</name>
</gene>
<accession>A5FJD0</accession>
<proteinExistence type="inferred from homology"/>
<protein>
    <recommendedName>
        <fullName evidence="1">Protoheme IX farnesyltransferase</fullName>
        <ecNumber evidence="1">2.5.1.141</ecNumber>
    </recommendedName>
    <alternativeName>
        <fullName evidence="1">Heme B farnesyltransferase</fullName>
    </alternativeName>
    <alternativeName>
        <fullName evidence="1">Heme O synthase</fullName>
    </alternativeName>
</protein>
<comment type="function">
    <text evidence="1">Converts heme B (protoheme IX) to heme O by substitution of the vinyl group on carbon 2 of heme B porphyrin ring with a hydroxyethyl farnesyl side group.</text>
</comment>
<comment type="catalytic activity">
    <reaction evidence="1">
        <text>heme b + (2E,6E)-farnesyl diphosphate + H2O = Fe(II)-heme o + diphosphate</text>
        <dbReference type="Rhea" id="RHEA:28070"/>
        <dbReference type="ChEBI" id="CHEBI:15377"/>
        <dbReference type="ChEBI" id="CHEBI:33019"/>
        <dbReference type="ChEBI" id="CHEBI:60344"/>
        <dbReference type="ChEBI" id="CHEBI:60530"/>
        <dbReference type="ChEBI" id="CHEBI:175763"/>
        <dbReference type="EC" id="2.5.1.141"/>
    </reaction>
</comment>
<comment type="pathway">
    <text evidence="1">Porphyrin-containing compound metabolism; heme O biosynthesis; heme O from protoheme: step 1/1.</text>
</comment>
<comment type="subcellular location">
    <subcellularLocation>
        <location evidence="1">Cell inner membrane</location>
        <topology evidence="1">Multi-pass membrane protein</topology>
    </subcellularLocation>
</comment>
<comment type="miscellaneous">
    <text evidence="1">Carbon 2 of the heme B porphyrin ring is defined according to the Fischer nomenclature.</text>
</comment>
<comment type="similarity">
    <text evidence="1">Belongs to the UbiA prenyltransferase family. Protoheme IX farnesyltransferase subfamily.</text>
</comment>
<comment type="sequence caution" evidence="2">
    <conflict type="erroneous initiation">
        <sequence resource="EMBL-CDS" id="ABQ04690"/>
    </conflict>
</comment>
<feature type="chain" id="PRO_0000346045" description="Protoheme IX farnesyltransferase">
    <location>
        <begin position="1"/>
        <end position="300"/>
    </location>
</feature>
<feature type="transmembrane region" description="Helical" evidence="1">
    <location>
        <begin position="20"/>
        <end position="40"/>
    </location>
</feature>
<feature type="transmembrane region" description="Helical" evidence="1">
    <location>
        <begin position="49"/>
        <end position="69"/>
    </location>
</feature>
<feature type="transmembrane region" description="Helical" evidence="1">
    <location>
        <begin position="97"/>
        <end position="117"/>
    </location>
</feature>
<feature type="transmembrane region" description="Helical" evidence="1">
    <location>
        <begin position="122"/>
        <end position="142"/>
    </location>
</feature>
<feature type="transmembrane region" description="Helical" evidence="1">
    <location>
        <begin position="145"/>
        <end position="165"/>
    </location>
</feature>
<feature type="transmembrane region" description="Helical" evidence="1">
    <location>
        <begin position="176"/>
        <end position="196"/>
    </location>
</feature>
<feature type="transmembrane region" description="Helical" evidence="1">
    <location>
        <begin position="217"/>
        <end position="237"/>
    </location>
</feature>
<feature type="transmembrane region" description="Helical" evidence="1">
    <location>
        <begin position="242"/>
        <end position="262"/>
    </location>
</feature>
<feature type="transmembrane region" description="Helical" evidence="1">
    <location>
        <begin position="278"/>
        <end position="298"/>
    </location>
</feature>
<keyword id="KW-0997">Cell inner membrane</keyword>
<keyword id="KW-1003">Cell membrane</keyword>
<keyword id="KW-0350">Heme biosynthesis</keyword>
<keyword id="KW-0472">Membrane</keyword>
<keyword id="KW-0808">Transferase</keyword>
<keyword id="KW-0812">Transmembrane</keyword>
<keyword id="KW-1133">Transmembrane helix</keyword>